<evidence type="ECO:0000255" key="1">
    <source>
        <dbReference type="HAMAP-Rule" id="MF_01611"/>
    </source>
</evidence>
<evidence type="ECO:0000255" key="2">
    <source>
        <dbReference type="PROSITE-ProRule" id="PRU01266"/>
    </source>
</evidence>
<protein>
    <recommendedName>
        <fullName evidence="1">7,8-didemethyl-8-hydroxy-5-deazariboflavin synthase</fullName>
        <ecNumber evidence="1">4.3.1.32</ecNumber>
    </recommendedName>
    <alternativeName>
        <fullName evidence="1">FO synthase subunit 1</fullName>
    </alternativeName>
</protein>
<name>COFG_ARCFU</name>
<dbReference type="EC" id="4.3.1.32" evidence="1"/>
<dbReference type="EMBL" id="AE000782">
    <property type="protein sequence ID" value="AAB90441.1"/>
    <property type="molecule type" value="Genomic_DNA"/>
</dbReference>
<dbReference type="PIR" id="E69349">
    <property type="entry name" value="E69349"/>
</dbReference>
<dbReference type="RefSeq" id="WP_010878300.1">
    <property type="nucleotide sequence ID" value="NC_000917.1"/>
</dbReference>
<dbReference type="SMR" id="O29461"/>
<dbReference type="STRING" id="224325.AF_0797"/>
<dbReference type="PaxDb" id="224325-AF_0797"/>
<dbReference type="DNASU" id="1484015"/>
<dbReference type="EnsemblBacteria" id="AAB90441">
    <property type="protein sequence ID" value="AAB90441"/>
    <property type="gene ID" value="AF_0797"/>
</dbReference>
<dbReference type="GeneID" id="24794395"/>
<dbReference type="KEGG" id="afu:AF_0797"/>
<dbReference type="eggNOG" id="arCOG00657">
    <property type="taxonomic scope" value="Archaea"/>
</dbReference>
<dbReference type="HOGENOM" id="CLU_054174_0_0_2"/>
<dbReference type="OrthoDB" id="35347at2157"/>
<dbReference type="PhylomeDB" id="O29461"/>
<dbReference type="UniPathway" id="UPA00072"/>
<dbReference type="Proteomes" id="UP000002199">
    <property type="component" value="Chromosome"/>
</dbReference>
<dbReference type="GO" id="GO:0051539">
    <property type="term" value="F:4 iron, 4 sulfur cluster binding"/>
    <property type="evidence" value="ECO:0007669"/>
    <property type="project" value="UniProtKB-KW"/>
</dbReference>
<dbReference type="GO" id="GO:0044689">
    <property type="term" value="F:7,8-didemethyl-8-hydroxy-5-deazariboflavin synthase activity"/>
    <property type="evidence" value="ECO:0007669"/>
    <property type="project" value="UniProtKB-EC"/>
</dbReference>
<dbReference type="GO" id="GO:0005506">
    <property type="term" value="F:iron ion binding"/>
    <property type="evidence" value="ECO:0007669"/>
    <property type="project" value="UniProtKB-UniRule"/>
</dbReference>
<dbReference type="GO" id="GO:0016765">
    <property type="term" value="F:transferase activity, transferring alkyl or aryl (other than methyl) groups"/>
    <property type="evidence" value="ECO:0007669"/>
    <property type="project" value="InterPro"/>
</dbReference>
<dbReference type="CDD" id="cd01335">
    <property type="entry name" value="Radical_SAM"/>
    <property type="match status" value="1"/>
</dbReference>
<dbReference type="Gene3D" id="3.20.20.70">
    <property type="entry name" value="Aldolase class I"/>
    <property type="match status" value="1"/>
</dbReference>
<dbReference type="HAMAP" id="MF_01611">
    <property type="entry name" value="FO_synth_sub1"/>
    <property type="match status" value="1"/>
</dbReference>
<dbReference type="InterPro" id="IPR013785">
    <property type="entry name" value="Aldolase_TIM"/>
</dbReference>
<dbReference type="InterPro" id="IPR019939">
    <property type="entry name" value="CofG_family"/>
</dbReference>
<dbReference type="InterPro" id="IPR006638">
    <property type="entry name" value="Elp3/MiaA/NifB-like_rSAM"/>
</dbReference>
<dbReference type="InterPro" id="IPR034405">
    <property type="entry name" value="F420"/>
</dbReference>
<dbReference type="InterPro" id="IPR007197">
    <property type="entry name" value="rSAM"/>
</dbReference>
<dbReference type="NCBIfam" id="TIGR03550">
    <property type="entry name" value="F420_cofG"/>
    <property type="match status" value="1"/>
</dbReference>
<dbReference type="NCBIfam" id="NF004884">
    <property type="entry name" value="PRK06245.1"/>
    <property type="match status" value="1"/>
</dbReference>
<dbReference type="PANTHER" id="PTHR43076:SF15">
    <property type="entry name" value="7,8-DIDEMETHYL-8-HYDROXY-5-DEAZARIBOFLAVIN SYNTHASE"/>
    <property type="match status" value="1"/>
</dbReference>
<dbReference type="PANTHER" id="PTHR43076">
    <property type="entry name" value="FO SYNTHASE (COFH)"/>
    <property type="match status" value="1"/>
</dbReference>
<dbReference type="Pfam" id="PF04055">
    <property type="entry name" value="Radical_SAM"/>
    <property type="match status" value="1"/>
</dbReference>
<dbReference type="SFLD" id="SFLDF00294">
    <property type="entry name" value="7_8-didemethyl-8-hydroxy-5-dea"/>
    <property type="match status" value="1"/>
</dbReference>
<dbReference type="SFLD" id="SFLDS00029">
    <property type="entry name" value="Radical_SAM"/>
    <property type="match status" value="1"/>
</dbReference>
<dbReference type="SMART" id="SM00729">
    <property type="entry name" value="Elp3"/>
    <property type="match status" value="1"/>
</dbReference>
<dbReference type="SUPFAM" id="SSF102114">
    <property type="entry name" value="Radical SAM enzymes"/>
    <property type="match status" value="1"/>
</dbReference>
<dbReference type="PROSITE" id="PS51918">
    <property type="entry name" value="RADICAL_SAM"/>
    <property type="match status" value="1"/>
</dbReference>
<comment type="function">
    <text evidence="1">Catalyzes the radical-mediated synthesis of 7,8-didemethyl-8-hydroxy-5-deazariboflavin from 5-amino-5-(4-hydroxybenzyl)-6-(D-ribitylimino)-5,6-dihydrouracil.</text>
</comment>
<comment type="catalytic activity">
    <reaction evidence="1">
        <text>5-amino-5-(4-hydroxybenzyl)-6-(D-ribitylimino)-5,6-dihydrouracil + S-adenosyl-L-methionine = 7,8-didemethyl-8-hydroxy-5-deazariboflavin + 5'-deoxyadenosine + L-methionine + NH4(+) + H(+)</text>
        <dbReference type="Rhea" id="RHEA:55204"/>
        <dbReference type="ChEBI" id="CHEBI:15378"/>
        <dbReference type="ChEBI" id="CHEBI:17319"/>
        <dbReference type="ChEBI" id="CHEBI:28938"/>
        <dbReference type="ChEBI" id="CHEBI:57844"/>
        <dbReference type="ChEBI" id="CHEBI:59789"/>
        <dbReference type="ChEBI" id="CHEBI:59904"/>
        <dbReference type="ChEBI" id="CHEBI:85936"/>
        <dbReference type="EC" id="4.3.1.32"/>
    </reaction>
</comment>
<comment type="cofactor">
    <cofactor evidence="1">
        <name>[4Fe-4S] cluster</name>
        <dbReference type="ChEBI" id="CHEBI:49883"/>
    </cofactor>
    <text evidence="1">Binds 1 [4Fe-4S] cluster. The cluster is coordinated with 3 cysteines and an exchangeable S-adenosyl-L-methionine.</text>
</comment>
<comment type="pathway">
    <text evidence="1">Cofactor biosynthesis; coenzyme F0 biosynthesis.</text>
</comment>
<comment type="subunit">
    <text evidence="1">Consists of two subunits, CofG and CofH.</text>
</comment>
<comment type="similarity">
    <text evidence="1">Belongs to the radical SAM superfamily. CofG family.</text>
</comment>
<keyword id="KW-0004">4Fe-4S</keyword>
<keyword id="KW-0408">Iron</keyword>
<keyword id="KW-0411">Iron-sulfur</keyword>
<keyword id="KW-0456">Lyase</keyword>
<keyword id="KW-0479">Metal-binding</keyword>
<keyword id="KW-1185">Reference proteome</keyword>
<keyword id="KW-0949">S-adenosyl-L-methionine</keyword>
<gene>
    <name evidence="1" type="primary">cofG</name>
    <name type="ordered locus">AF_0797</name>
</gene>
<organism>
    <name type="scientific">Archaeoglobus fulgidus (strain ATCC 49558 / DSM 4304 / JCM 9628 / NBRC 100126 / VC-16)</name>
    <dbReference type="NCBI Taxonomy" id="224325"/>
    <lineage>
        <taxon>Archaea</taxon>
        <taxon>Methanobacteriati</taxon>
        <taxon>Methanobacteriota</taxon>
        <taxon>Archaeoglobi</taxon>
        <taxon>Archaeoglobales</taxon>
        <taxon>Archaeoglobaceae</taxon>
        <taxon>Archaeoglobus</taxon>
    </lineage>
</organism>
<proteinExistence type="inferred from homology"/>
<sequence>MKIVTYSKNVFIPLTRNCRNRCDYCGFRSEEIGVMSAEEVRKILSAARGAKEALFTFGERPDEVYPEFKAMLLEMGYKSMVDYILEMNKIAVEMGFLPHTNAGILSKEEMRKLKPYNASMGLMLEQAVELECHANSPGKKPEVRIKMIRDAGKLQIPFTTGILVGIGEGREDRLYSLEIIAEIQDNYGHIQEVIVQNFKPKKGTPMENTPPPTLEEMLEAVKAAREILPQEVAIQIPPNLVDDIYPFLKAGANDVGGISNVTHDYINPESPWPEVERLERALRGEFILKERLPIYPRFVKLKWYGEALEPLIEKYSDADGYARP</sequence>
<accession>O29461</accession>
<feature type="chain" id="PRO_0000147760" description="7,8-didemethyl-8-hydroxy-5-deazariboflavin synthase">
    <location>
        <begin position="1"/>
        <end position="324"/>
    </location>
</feature>
<feature type="domain" description="Radical SAM core" evidence="2">
    <location>
        <begin position="4"/>
        <end position="239"/>
    </location>
</feature>
<feature type="binding site" evidence="1">
    <location>
        <position position="18"/>
    </location>
    <ligand>
        <name>[4Fe-4S] cluster</name>
        <dbReference type="ChEBI" id="CHEBI:49883"/>
        <note>4Fe-4S-S-AdoMet</note>
    </ligand>
</feature>
<feature type="binding site" evidence="1">
    <location>
        <position position="22"/>
    </location>
    <ligand>
        <name>[4Fe-4S] cluster</name>
        <dbReference type="ChEBI" id="CHEBI:49883"/>
        <note>4Fe-4S-S-AdoMet</note>
    </ligand>
</feature>
<feature type="binding site" evidence="1">
    <location>
        <position position="25"/>
    </location>
    <ligand>
        <name>[4Fe-4S] cluster</name>
        <dbReference type="ChEBI" id="CHEBI:49883"/>
        <note>4Fe-4S-S-AdoMet</note>
    </ligand>
</feature>
<reference key="1">
    <citation type="journal article" date="1997" name="Nature">
        <title>The complete genome sequence of the hyperthermophilic, sulphate-reducing archaeon Archaeoglobus fulgidus.</title>
        <authorList>
            <person name="Klenk H.-P."/>
            <person name="Clayton R.A."/>
            <person name="Tomb J.-F."/>
            <person name="White O."/>
            <person name="Nelson K.E."/>
            <person name="Ketchum K.A."/>
            <person name="Dodson R.J."/>
            <person name="Gwinn M.L."/>
            <person name="Hickey E.K."/>
            <person name="Peterson J.D."/>
            <person name="Richardson D.L."/>
            <person name="Kerlavage A.R."/>
            <person name="Graham D.E."/>
            <person name="Kyrpides N.C."/>
            <person name="Fleischmann R.D."/>
            <person name="Quackenbush J."/>
            <person name="Lee N.H."/>
            <person name="Sutton G.G."/>
            <person name="Gill S.R."/>
            <person name="Kirkness E.F."/>
            <person name="Dougherty B.A."/>
            <person name="McKenney K."/>
            <person name="Adams M.D."/>
            <person name="Loftus B.J."/>
            <person name="Peterson S.N."/>
            <person name="Reich C.I."/>
            <person name="McNeil L.K."/>
            <person name="Badger J.H."/>
            <person name="Glodek A."/>
            <person name="Zhou L."/>
            <person name="Overbeek R."/>
            <person name="Gocayne J.D."/>
            <person name="Weidman J.F."/>
            <person name="McDonald L.A."/>
            <person name="Utterback T.R."/>
            <person name="Cotton M.D."/>
            <person name="Spriggs T."/>
            <person name="Artiach P."/>
            <person name="Kaine B.P."/>
            <person name="Sykes S.M."/>
            <person name="Sadow P.W."/>
            <person name="D'Andrea K.P."/>
            <person name="Bowman C."/>
            <person name="Fujii C."/>
            <person name="Garland S.A."/>
            <person name="Mason T.M."/>
            <person name="Olsen G.J."/>
            <person name="Fraser C.M."/>
            <person name="Smith H.O."/>
            <person name="Woese C.R."/>
            <person name="Venter J.C."/>
        </authorList>
    </citation>
    <scope>NUCLEOTIDE SEQUENCE [LARGE SCALE GENOMIC DNA]</scope>
    <source>
        <strain>ATCC 49558 / DSM 4304 / JCM 9628 / NBRC 100126 / VC-16</strain>
    </source>
</reference>